<feature type="chain" id="PRO_0000084225" description="IQ calmodulin-binding motif-containing protein 1">
    <location>
        <begin position="1"/>
        <end position="598"/>
    </location>
</feature>
<feature type="domain" description="IQ 1" evidence="3">
    <location>
        <begin position="294"/>
        <end position="317"/>
    </location>
</feature>
<feature type="domain" description="IQ 2" evidence="3">
    <location>
        <begin position="318"/>
        <end position="338"/>
    </location>
</feature>
<feature type="domain" description="IQ 3" evidence="3">
    <location>
        <begin position="387"/>
        <end position="416"/>
    </location>
</feature>
<feature type="domain" description="IQ 4" evidence="3">
    <location>
        <begin position="417"/>
        <end position="437"/>
    </location>
</feature>
<feature type="region of interest" description="Interaction with BBS1, BBS8 and BBS9" evidence="10">
    <location>
        <begin position="1"/>
        <end position="157"/>
    </location>
</feature>
<feature type="region of interest" description="Interaction with CEP290, BBS1, BBS2, BBS4, BBS5, BBS7, BBS8 and BBS9" evidence="10">
    <location>
        <begin position="287"/>
        <end position="598"/>
    </location>
</feature>
<feature type="region of interest" description="Interaction with BBS1, BBS2, BBS4, BBS7, BBS8 and BBS9" evidence="10">
    <location>
        <begin position="530"/>
        <end position="598"/>
    </location>
</feature>
<feature type="coiled-coil region" evidence="2">
    <location>
        <begin position="336"/>
        <end position="373"/>
    </location>
</feature>
<feature type="modified residue" description="Phosphoserine" evidence="15">
    <location>
        <position position="572"/>
    </location>
</feature>
<feature type="splice variant" id="VSP_010245" description="In isoform 2." evidence="11 12">
    <location>
        <begin position="196"/>
        <end position="328"/>
    </location>
</feature>
<feature type="splice variant" id="VSP_013943" description="In isoform 3." evidence="13">
    <original>KLHQAACLIQA</original>
    <variation>IQTIKDVAGDK</variation>
    <location>
        <begin position="293"/>
        <end position="303"/>
    </location>
</feature>
<feature type="splice variant" id="VSP_013944" description="In isoform 3." evidence="13">
    <location>
        <begin position="304"/>
        <end position="598"/>
    </location>
</feature>
<feature type="sequence variant" id="VAR_051074" description="In dbSNP:rs11926958.">
    <original>F</original>
    <variation>L</variation>
    <location>
        <position position="142"/>
    </location>
</feature>
<feature type="sequence variant" id="VAR_051075" description="Impairs interaction with calmodulin; dbSNP:rs1141528." evidence="5">
    <original>I</original>
    <variation>N</variation>
    <location>
        <position position="393"/>
    </location>
</feature>
<feature type="sequence variant" id="VAR_061668" description="In dbSNP:rs17849995." evidence="4">
    <original>C</original>
    <variation>Y</variation>
    <location>
        <position position="434"/>
    </location>
</feature>
<feature type="sequence variant" id="VAR_051076" description="In dbSNP:rs11920543.">
    <original>R</original>
    <variation>C</variation>
    <location>
        <position position="435"/>
    </location>
</feature>
<feature type="mutagenesis site" description="Disrupts interaction with CEP290, no effect on interaction with BBS1, BBS2, BBS4, BBS8 and BBS9, abolishes ciliogenesis." evidence="9 10">
    <original>A</original>
    <variation>K</variation>
    <location>
        <position position="549"/>
    </location>
</feature>
<feature type="sequence conflict" description="In Ref. 1; AAY46029." evidence="14" ref="1">
    <original>Q</original>
    <variation>P</variation>
    <location sequence="Q15051-2">
        <position position="352"/>
    </location>
</feature>
<comment type="function">
    <text evidence="9 10">Involved in ciliogenesis. The function in an early step in cilia formation depends on its association with CEP290/NPHP6 (PubMed:21565611, PubMed:23446637). Involved in regulation of the BBSome complex integrity, specifically for presence of BBS2 and BBS5 in the complex, and in ciliary targeting of selected BBSome cargos. May play a role in controlling entry of the BBSome complex to cilia possibly implicating CEP290/NPHP6 (PubMed:25552655).</text>
</comment>
<comment type="subunit">
    <text evidence="1 5 7 8 9 10">Interacts with CEP290/NPHP6; IQCB1/NPHP5 and CEP290 are proposed to form a functional NPHP5-6 module/NPHP6; localized to the centrosome. Interacts with calmodulin, ATXN10 (PubMed:15723066, PubMed:16322217, PubMed:18723859, PubMed:21565611, PubMed:23446637, PubMed:25552655). Interacts with NPHP1, INVS, NPHP4 and RPGRIP1L; these interactions likely require additional interactors (By similarity). Associates with the BBSome complex; interacts with BBS1, BBS2, BBS4, BBS5, BBS7, BBS8 and BBS9 (PubMed:25552655).</text>
</comment>
<comment type="interaction">
    <interactant intactId="EBI-2805823">
        <id>Q15051</id>
    </interactant>
    <interactant intactId="EBI-1805484">
        <id>Q8NFJ9</id>
        <label>BBS1</label>
    </interactant>
    <organismsDiffer>false</organismsDiffer>
    <experiments>4</experiments>
</comment>
<comment type="interaction">
    <interactant intactId="EBI-2805823">
        <id>Q15051</id>
    </interactant>
    <interactant intactId="EBI-748297">
        <id>Q9BXC9</id>
        <label>BBS2</label>
    </interactant>
    <organismsDiffer>false</organismsDiffer>
    <experiments>8</experiments>
</comment>
<comment type="interaction">
    <interactant intactId="EBI-2805823">
        <id>Q15051</id>
    </interactant>
    <interactant intactId="EBI-1805814">
        <id>Q96RK4</id>
        <label>BBS4</label>
    </interactant>
    <organismsDiffer>false</organismsDiffer>
    <experiments>5</experiments>
</comment>
<comment type="interaction">
    <interactant intactId="EBI-2805823">
        <id>Q15051</id>
    </interactant>
    <interactant intactId="EBI-2892592">
        <id>Q8N3I7</id>
        <label>BBS5</label>
    </interactant>
    <organismsDiffer>false</organismsDiffer>
    <experiments>8</experiments>
</comment>
<comment type="interaction">
    <interactant intactId="EBI-2805823">
        <id>Q15051</id>
    </interactant>
    <interactant intactId="EBI-1806001">
        <id>Q8IWZ6</id>
        <label>BBS7</label>
    </interactant>
    <organismsDiffer>false</organismsDiffer>
    <experiments>5</experiments>
</comment>
<comment type="interaction">
    <interactant intactId="EBI-2805823">
        <id>Q15051</id>
    </interactant>
    <interactant intactId="EBI-2826852">
        <id>Q3SYG4</id>
        <label>BBS9</label>
    </interactant>
    <organismsDiffer>false</organismsDiffer>
    <experiments>5</experiments>
</comment>
<comment type="interaction">
    <interactant intactId="EBI-2805823">
        <id>Q15051</id>
    </interactant>
    <interactant intactId="EBI-397435">
        <id>P62158</id>
        <label>CALM3</label>
    </interactant>
    <organismsDiffer>false</organismsDiffer>
    <experiments>8</experiments>
</comment>
<comment type="interaction">
    <interactant intactId="EBI-2805823">
        <id>Q15051</id>
    </interactant>
    <interactant intactId="EBI-1811944">
        <id>O15078</id>
        <label>CEP290</label>
    </interactant>
    <organismsDiffer>false</organismsDiffer>
    <experiments>25</experiments>
</comment>
<comment type="interaction">
    <interactant intactId="EBI-2805823">
        <id>Q15051</id>
    </interactant>
    <interactant intactId="EBI-353675">
        <id>Q9Y265</id>
        <label>RUVBL1</label>
    </interactant>
    <organismsDiffer>false</organismsDiffer>
    <experiments>2</experiments>
</comment>
<comment type="interaction">
    <interactant intactId="EBI-2805823">
        <id>Q15051</id>
    </interactant>
    <interactant intactId="EBI-2892638">
        <id>Q8TAM2</id>
        <label>TTC8</label>
    </interactant>
    <organismsDiffer>false</organismsDiffer>
    <experiments>5</experiments>
</comment>
<comment type="interaction">
    <interactant intactId="EBI-11944935">
        <id>Q15051-2</id>
    </interactant>
    <interactant intactId="EBI-747537">
        <id>P27482</id>
        <label>CALML3</label>
    </interactant>
    <organismsDiffer>false</organismsDiffer>
    <experiments>3</experiments>
</comment>
<comment type="interaction">
    <interactant intactId="EBI-11944935">
        <id>Q15051-2</id>
    </interactant>
    <interactant intactId="EBI-8472129">
        <id>Q9HAQ2</id>
        <label>KIF9</label>
    </interactant>
    <organismsDiffer>false</organismsDiffer>
    <experiments>3</experiments>
</comment>
<comment type="interaction">
    <interactant intactId="EBI-11944935">
        <id>Q15051-2</id>
    </interactant>
    <interactant intactId="EBI-740738">
        <id>O95751</id>
        <label>LDOC1</label>
    </interactant>
    <organismsDiffer>false</organismsDiffer>
    <experiments>3</experiments>
</comment>
<comment type="interaction">
    <interactant intactId="EBI-11944935">
        <id>Q15051-2</id>
    </interactant>
    <interactant intactId="EBI-743811">
        <id>Q8NEH6</id>
        <label>MNS1</label>
    </interactant>
    <organismsDiffer>false</organismsDiffer>
    <experiments>3</experiments>
</comment>
<comment type="interaction">
    <interactant intactId="EBI-11944935">
        <id>Q15051-2</id>
    </interactant>
    <interactant intactId="EBI-12386584">
        <id>P22061-2</id>
        <label>PCMT1</label>
    </interactant>
    <organismsDiffer>false</organismsDiffer>
    <experiments>3</experiments>
</comment>
<comment type="interaction">
    <interactant intactId="EBI-11944935">
        <id>Q15051-2</id>
    </interactant>
    <interactant intactId="EBI-11524542">
        <id>O76083-2</id>
        <label>PDE9A</label>
    </interactant>
    <organismsDiffer>false</organismsDiffer>
    <experiments>5</experiments>
</comment>
<comment type="interaction">
    <interactant intactId="EBI-11944935">
        <id>Q15051-2</id>
    </interactant>
    <interactant intactId="EBI-6117072">
        <id>Q86VW0</id>
        <label>SESTD1</label>
    </interactant>
    <organismsDiffer>false</organismsDiffer>
    <experiments>3</experiments>
</comment>
<comment type="interaction">
    <interactant intactId="EBI-11944935">
        <id>Q15051-2</id>
    </interactant>
    <interactant intactId="EBI-358489">
        <id>Q96GM5</id>
        <label>SMARCD1</label>
    </interactant>
    <organismsDiffer>false</organismsDiffer>
    <experiments>3</experiments>
</comment>
<comment type="interaction">
    <interactant intactId="EBI-11944935">
        <id>Q15051-2</id>
    </interactant>
    <interactant intactId="EBI-742688">
        <id>Q9NZD8</id>
        <label>SPG21</label>
    </interactant>
    <organismsDiffer>false</organismsDiffer>
    <experiments>3</experiments>
</comment>
<comment type="subcellular location">
    <subcellularLocation>
        <location evidence="8">Cytoplasm</location>
        <location evidence="8">Cytoskeleton</location>
        <location evidence="8">Microtubule organizing center</location>
        <location evidence="8">Centrosome</location>
    </subcellularLocation>
    <subcellularLocation>
        <location evidence="9">Cytoplasm</location>
        <location evidence="9">Cytoskeleton</location>
        <location evidence="9">Microtubule organizing center</location>
        <location evidence="9">Centrosome</location>
        <location evidence="9">Centriole</location>
    </subcellularLocation>
    <text>Localization to the centrosome depends on the interaction with CEP290/NPHP6.</text>
</comment>
<comment type="alternative products">
    <event type="alternative splicing"/>
    <isoform>
        <id>Q15051-1</id>
        <name>1</name>
        <name>PIQ-L</name>
        <sequence type="displayed"/>
    </isoform>
    <isoform>
        <id>Q15051-2</id>
        <name>2</name>
        <name>PIQ-S</name>
        <sequence type="described" ref="VSP_010245"/>
    </isoform>
    <isoform>
        <id>Q15051-3</id>
        <name>3</name>
        <sequence type="described" ref="VSP_013943 VSP_013944"/>
    </isoform>
</comment>
<comment type="tissue specificity">
    <text evidence="5 6">Ubiquitously expressed in fetal and adult tissues. Localized to the outer segments and connecting cilia of photoreceptor cells. Up-regulated in a number of primary colorectal and gastric tumors.</text>
</comment>
<comment type="induction">
    <text evidence="6">Down-regulated by DNA damage in a p53-dependent manner.</text>
</comment>
<comment type="domain">
    <text evidence="9">The IQ domains mediate the interaction with calmodulin.</text>
</comment>
<comment type="disease" evidence="5">
    <disease id="DI-01011">
        <name>Senior-Loken syndrome 5</name>
        <acronym>SLSN5</acronym>
        <description>A renal-retinal disorder characterized by progressive wasting of the filtering unit of the kidney (nephronophthisis), with or without medullary cystic renal disease, and progressive eye disease. Typically this disorder becomes apparent during the first year of life.</description>
        <dbReference type="MIM" id="609254"/>
    </disease>
    <text>The disease is caused by variants affecting the gene represented in this entry.</text>
</comment>
<comment type="disease" evidence="9">
    <disease id="DI-00637">
        <name>Leber congenital amaurosis 10</name>
        <acronym>LCA10</acronym>
        <description>A severe dystrophy of the retina, typically becoming evident in the first years of life. Visual function is usually poor and often accompanied by nystagmus, sluggish or near-absent pupillary responses, photophobia, high hyperopia and keratoconus.</description>
        <dbReference type="MIM" id="611755"/>
    </disease>
    <text>The gene represented in this entry may be involved in disease pathogenesis.</text>
</comment>
<comment type="miscellaneous">
    <molecule>Isoform 2</molecule>
    <text evidence="14">Low abundance isoform.</text>
</comment>
<comment type="sequence caution" evidence="14">
    <conflict type="erroneous initiation">
        <sequence resource="EMBL-CDS" id="BAA04968"/>
    </conflict>
</comment>
<gene>
    <name type="primary">IQCB1</name>
    <name type="synonym">KIAA0036</name>
    <name type="synonym">NPHP5</name>
    <name type="ORF">OK/SW-cl.85</name>
</gene>
<sequence>MKPTGTDPRILSIAAEVAKSPEQNVPVILLKLKEIINITPLGSSELKKIKQDIYCYDLIQYCLLVLSQDYSRIQGGWTTISQLTQILSHCCVGLEPGEDAEEFYNELLPSAAENFLVLGRQLQTCFINAAKAEEKDELLHFFQIVTDSLFWLLGGHVELIQNVLQSDHFLHLLQADNVQIGSAVMMMLQNILQINSGDLLRIGRKALYSILDEVIFKLFSTPSPVIRSTATKLLLLMAESHQEILILLRQSTCYKGLRRLLSKQETGTEFSQELRQLVGLLSPMVYQEVEEQKLHQAACLIQAYWKGFQTRKRLKKLPSAVIALQRSFRSKRSKMLLEINRQKEEEDLKLQLQLQRQRAMRLSRELQLSMLEIVHPGQVEKHYREMEEKSALIIQKHWRGYRERKNFHQQRQSLIEYKAAVTLQRAALKFLAKCRKKKKLFAPWRGLQELTDARRVELKKRVDDYVRRHLGSPMSDVVSRELHAQAQERLQHYFMGRALEERAQQHREALIAQISTNVEQLMKAPSLKEAEGKEPELFLSRSRPVAAKAKQAHLTTLKHIQAPWWKKLGEESGDEIDVPKDELSIELENLFIGGTKPP</sequence>
<name>IQCB1_HUMAN</name>
<evidence type="ECO:0000250" key="1">
    <source>
        <dbReference type="UniProtKB" id="Q8BP00"/>
    </source>
</evidence>
<evidence type="ECO:0000255" key="2"/>
<evidence type="ECO:0000255" key="3">
    <source>
        <dbReference type="PROSITE-ProRule" id="PRU00116"/>
    </source>
</evidence>
<evidence type="ECO:0000269" key="4">
    <source>
    </source>
</evidence>
<evidence type="ECO:0000269" key="5">
    <source>
    </source>
</evidence>
<evidence type="ECO:0000269" key="6">
    <source>
    </source>
</evidence>
<evidence type="ECO:0000269" key="7">
    <source>
    </source>
</evidence>
<evidence type="ECO:0000269" key="8">
    <source>
    </source>
</evidence>
<evidence type="ECO:0000269" key="9">
    <source>
    </source>
</evidence>
<evidence type="ECO:0000269" key="10">
    <source>
    </source>
</evidence>
<evidence type="ECO:0000303" key="11">
    <source>
    </source>
</evidence>
<evidence type="ECO:0000303" key="12">
    <source>
    </source>
</evidence>
<evidence type="ECO:0000303" key="13">
    <source ref="4"/>
</evidence>
<evidence type="ECO:0000305" key="14"/>
<evidence type="ECO:0007744" key="15">
    <source>
    </source>
</evidence>
<organism>
    <name type="scientific">Homo sapiens</name>
    <name type="common">Human</name>
    <dbReference type="NCBI Taxonomy" id="9606"/>
    <lineage>
        <taxon>Eukaryota</taxon>
        <taxon>Metazoa</taxon>
        <taxon>Chordata</taxon>
        <taxon>Craniata</taxon>
        <taxon>Vertebrata</taxon>
        <taxon>Euteleostomi</taxon>
        <taxon>Mammalia</taxon>
        <taxon>Eutheria</taxon>
        <taxon>Euarchontoglires</taxon>
        <taxon>Primates</taxon>
        <taxon>Haplorrhini</taxon>
        <taxon>Catarrhini</taxon>
        <taxon>Hominidae</taxon>
        <taxon>Homo</taxon>
    </lineage>
</organism>
<proteinExistence type="evidence at protein level"/>
<dbReference type="EMBL" id="AY964667">
    <property type="protein sequence ID" value="AAY46029.1"/>
    <property type="molecule type" value="mRNA"/>
</dbReference>
<dbReference type="EMBL" id="AY964668">
    <property type="protein sequence ID" value="AAY46030.1"/>
    <property type="molecule type" value="mRNA"/>
</dbReference>
<dbReference type="EMBL" id="AY714228">
    <property type="protein sequence ID" value="AAW47233.1"/>
    <property type="molecule type" value="mRNA"/>
</dbReference>
<dbReference type="EMBL" id="D25278">
    <property type="protein sequence ID" value="BAA04968.2"/>
    <property type="status" value="ALT_INIT"/>
    <property type="molecule type" value="mRNA"/>
</dbReference>
<dbReference type="EMBL" id="AB062481">
    <property type="protein sequence ID" value="BAB93506.1"/>
    <property type="molecule type" value="mRNA"/>
</dbReference>
<dbReference type="EMBL" id="CH471052">
    <property type="protein sequence ID" value="EAW79500.1"/>
    <property type="molecule type" value="Genomic_DNA"/>
</dbReference>
<dbReference type="EMBL" id="BC005806">
    <property type="protein sequence ID" value="AAH05806.1"/>
    <property type="molecule type" value="mRNA"/>
</dbReference>
<dbReference type="CCDS" id="CCDS33836.1">
    <molecule id="Q15051-2"/>
</dbReference>
<dbReference type="CCDS" id="CCDS33837.1">
    <molecule id="Q15051-1"/>
</dbReference>
<dbReference type="RefSeq" id="NP_001018864.2">
    <molecule id="Q15051-1"/>
    <property type="nucleotide sequence ID" value="NM_001023570.4"/>
</dbReference>
<dbReference type="RefSeq" id="NP_001018865.2">
    <molecule id="Q15051-2"/>
    <property type="nucleotide sequence ID" value="NM_001023571.4"/>
</dbReference>
<dbReference type="RefSeq" id="NP_001306036.1">
    <molecule id="Q15051-1"/>
    <property type="nucleotide sequence ID" value="NM_001319107.2"/>
</dbReference>
<dbReference type="RefSeq" id="XP_047305209.1">
    <molecule id="Q15051-3"/>
    <property type="nucleotide sequence ID" value="XM_047449253.1"/>
</dbReference>
<dbReference type="RefSeq" id="XP_054204460.1">
    <molecule id="Q15051-3"/>
    <property type="nucleotide sequence ID" value="XM_054348485.1"/>
</dbReference>
<dbReference type="SMR" id="Q15051"/>
<dbReference type="BioGRID" id="115015">
    <property type="interactions" value="291"/>
</dbReference>
<dbReference type="ComplexPortal" id="CPX-2536">
    <property type="entry name" value="CEP290-NPHP5 transition zone complex"/>
</dbReference>
<dbReference type="CORUM" id="Q15051"/>
<dbReference type="FunCoup" id="Q15051">
    <property type="interactions" value="1883"/>
</dbReference>
<dbReference type="IntAct" id="Q15051">
    <property type="interactions" value="255"/>
</dbReference>
<dbReference type="MINT" id="Q15051"/>
<dbReference type="STRING" id="9606.ENSP00000311505"/>
<dbReference type="iPTMnet" id="Q15051"/>
<dbReference type="PhosphoSitePlus" id="Q15051"/>
<dbReference type="BioMuta" id="IQCB1"/>
<dbReference type="DMDM" id="3123054"/>
<dbReference type="jPOST" id="Q15051"/>
<dbReference type="MassIVE" id="Q15051"/>
<dbReference type="PaxDb" id="9606-ENSP00000311505"/>
<dbReference type="PeptideAtlas" id="Q15051"/>
<dbReference type="ProteomicsDB" id="60403">
    <molecule id="Q15051-1"/>
</dbReference>
<dbReference type="ProteomicsDB" id="60404">
    <molecule id="Q15051-2"/>
</dbReference>
<dbReference type="ProteomicsDB" id="60405">
    <molecule id="Q15051-3"/>
</dbReference>
<dbReference type="Pumba" id="Q15051"/>
<dbReference type="Antibodypedia" id="32846">
    <property type="antibodies" value="190 antibodies from 28 providers"/>
</dbReference>
<dbReference type="DNASU" id="9657"/>
<dbReference type="Ensembl" id="ENST00000310864.11">
    <molecule id="Q15051-1"/>
    <property type="protein sequence ID" value="ENSP00000311505.6"/>
    <property type="gene ID" value="ENSG00000173226.17"/>
</dbReference>
<dbReference type="Ensembl" id="ENST00000349820.10">
    <molecule id="Q15051-2"/>
    <property type="protein sequence ID" value="ENSP00000323756.7"/>
    <property type="gene ID" value="ENSG00000173226.17"/>
</dbReference>
<dbReference type="Ensembl" id="ENST00000393650.7">
    <molecule id="Q15051-3"/>
    <property type="protein sequence ID" value="ENSP00000377261.3"/>
    <property type="gene ID" value="ENSG00000173226.17"/>
</dbReference>
<dbReference type="GeneID" id="9657"/>
<dbReference type="KEGG" id="hsa:9657"/>
<dbReference type="MANE-Select" id="ENST00000310864.11">
    <property type="protein sequence ID" value="ENSP00000311505.6"/>
    <property type="RefSeq nucleotide sequence ID" value="NM_001023570.4"/>
    <property type="RefSeq protein sequence ID" value="NP_001018864.2"/>
</dbReference>
<dbReference type="UCSC" id="uc003eek.3">
    <molecule id="Q15051-1"/>
    <property type="organism name" value="human"/>
</dbReference>
<dbReference type="AGR" id="HGNC:28949"/>
<dbReference type="CTD" id="9657"/>
<dbReference type="DisGeNET" id="9657"/>
<dbReference type="GeneCards" id="IQCB1"/>
<dbReference type="GeneReviews" id="IQCB1"/>
<dbReference type="HGNC" id="HGNC:28949">
    <property type="gene designation" value="IQCB1"/>
</dbReference>
<dbReference type="HPA" id="ENSG00000173226">
    <property type="expression patterns" value="Low tissue specificity"/>
</dbReference>
<dbReference type="MalaCards" id="IQCB1"/>
<dbReference type="MIM" id="609237">
    <property type="type" value="gene"/>
</dbReference>
<dbReference type="MIM" id="609254">
    <property type="type" value="phenotype"/>
</dbReference>
<dbReference type="MIM" id="611755">
    <property type="type" value="phenotype"/>
</dbReference>
<dbReference type="neXtProt" id="NX_Q15051"/>
<dbReference type="OpenTargets" id="ENSG00000173226"/>
<dbReference type="Orphanet" id="65">
    <property type="disease" value="Leber congenital amaurosis"/>
</dbReference>
<dbReference type="Orphanet" id="3156">
    <property type="disease" value="Senior-Loken syndrome"/>
</dbReference>
<dbReference type="PharmGKB" id="PA134869761"/>
<dbReference type="VEuPathDB" id="HostDB:ENSG00000173226"/>
<dbReference type="eggNOG" id="KOG0160">
    <property type="taxonomic scope" value="Eukaryota"/>
</dbReference>
<dbReference type="GeneTree" id="ENSGT00390000002188"/>
<dbReference type="HOGENOM" id="CLU_035387_0_0_1"/>
<dbReference type="InParanoid" id="Q15051"/>
<dbReference type="OMA" id="DDYIRLH"/>
<dbReference type="OrthoDB" id="8178106at2759"/>
<dbReference type="PAN-GO" id="Q15051">
    <property type="GO annotations" value="2 GO annotations based on evolutionary models"/>
</dbReference>
<dbReference type="PhylomeDB" id="Q15051"/>
<dbReference type="TreeFam" id="TF351884"/>
<dbReference type="PathwayCommons" id="Q15051"/>
<dbReference type="Reactome" id="R-HSA-5620912">
    <property type="pathway name" value="Anchoring of the basal body to the plasma membrane"/>
</dbReference>
<dbReference type="SignaLink" id="Q15051"/>
<dbReference type="BioGRID-ORCS" id="9657">
    <property type="hits" value="95 hits in 1148 CRISPR screens"/>
</dbReference>
<dbReference type="CD-CODE" id="8C2F96ED">
    <property type="entry name" value="Centrosome"/>
</dbReference>
<dbReference type="ChiTaRS" id="IQCB1">
    <property type="organism name" value="human"/>
</dbReference>
<dbReference type="GeneWiki" id="IQCB1"/>
<dbReference type="GenomeRNAi" id="9657"/>
<dbReference type="Pharos" id="Q15051">
    <property type="development level" value="Tbio"/>
</dbReference>
<dbReference type="PRO" id="PR:Q15051"/>
<dbReference type="Proteomes" id="UP000005640">
    <property type="component" value="Chromosome 3"/>
</dbReference>
<dbReference type="RNAct" id="Q15051">
    <property type="molecule type" value="protein"/>
</dbReference>
<dbReference type="Bgee" id="ENSG00000173226">
    <property type="expression patterns" value="Expressed in oocyte and 189 other cell types or tissues"/>
</dbReference>
<dbReference type="ExpressionAtlas" id="Q15051">
    <property type="expression patterns" value="baseline and differential"/>
</dbReference>
<dbReference type="GO" id="GO:0005814">
    <property type="term" value="C:centriole"/>
    <property type="evidence" value="ECO:0007669"/>
    <property type="project" value="UniProtKB-SubCell"/>
</dbReference>
<dbReference type="GO" id="GO:0005813">
    <property type="term" value="C:centrosome"/>
    <property type="evidence" value="ECO:0000314"/>
    <property type="project" value="UniProtKB"/>
</dbReference>
<dbReference type="GO" id="GO:0005929">
    <property type="term" value="C:cilium"/>
    <property type="evidence" value="ECO:0000318"/>
    <property type="project" value="GO_Central"/>
</dbReference>
<dbReference type="GO" id="GO:0005829">
    <property type="term" value="C:cytosol"/>
    <property type="evidence" value="ECO:0000304"/>
    <property type="project" value="Reactome"/>
</dbReference>
<dbReference type="GO" id="GO:0070062">
    <property type="term" value="C:extracellular exosome"/>
    <property type="evidence" value="ECO:0007005"/>
    <property type="project" value="UniProtKB"/>
</dbReference>
<dbReference type="GO" id="GO:0032391">
    <property type="term" value="C:photoreceptor connecting cilium"/>
    <property type="evidence" value="ECO:0000314"/>
    <property type="project" value="HGNC-UCL"/>
</dbReference>
<dbReference type="GO" id="GO:0001750">
    <property type="term" value="C:photoreceptor outer segment"/>
    <property type="evidence" value="ECO:0007669"/>
    <property type="project" value="Ensembl"/>
</dbReference>
<dbReference type="GO" id="GO:0062063">
    <property type="term" value="F:BBSome binding"/>
    <property type="evidence" value="ECO:0000314"/>
    <property type="project" value="UniProt"/>
</dbReference>
<dbReference type="GO" id="GO:0005516">
    <property type="term" value="F:calmodulin binding"/>
    <property type="evidence" value="ECO:0000314"/>
    <property type="project" value="HGNC-UCL"/>
</dbReference>
<dbReference type="GO" id="GO:0019899">
    <property type="term" value="F:enzyme binding"/>
    <property type="evidence" value="ECO:0000353"/>
    <property type="project" value="UniProtKB"/>
</dbReference>
<dbReference type="GO" id="GO:0030674">
    <property type="term" value="F:protein-macromolecule adaptor activity"/>
    <property type="evidence" value="ECO:0000314"/>
    <property type="project" value="UniProt"/>
</dbReference>
<dbReference type="GO" id="GO:0060271">
    <property type="term" value="P:cilium assembly"/>
    <property type="evidence" value="ECO:0000314"/>
    <property type="project" value="UniProt"/>
</dbReference>
<dbReference type="GO" id="GO:0061824">
    <property type="term" value="P:cytosolic ciliogenesis"/>
    <property type="evidence" value="ECO:0000314"/>
    <property type="project" value="UniProt"/>
</dbReference>
<dbReference type="GO" id="GO:0048496">
    <property type="term" value="P:maintenance of animal organ identity"/>
    <property type="evidence" value="ECO:0000315"/>
    <property type="project" value="HGNC-UCL"/>
</dbReference>
<dbReference type="GO" id="GO:0045494">
    <property type="term" value="P:photoreceptor cell maintenance"/>
    <property type="evidence" value="ECO:0000315"/>
    <property type="project" value="HGNC-UCL"/>
</dbReference>
<dbReference type="CDD" id="cd23767">
    <property type="entry name" value="IQCD"/>
    <property type="match status" value="1"/>
</dbReference>
<dbReference type="FunFam" id="1.20.5.190:FF:000048">
    <property type="entry name" value="IQ motif containing B1"/>
    <property type="match status" value="1"/>
</dbReference>
<dbReference type="FunFam" id="1.20.5.190:FF:000058">
    <property type="entry name" value="IQ motif containing B1"/>
    <property type="match status" value="1"/>
</dbReference>
<dbReference type="Gene3D" id="1.20.5.190">
    <property type="match status" value="2"/>
</dbReference>
<dbReference type="InterPro" id="IPR016024">
    <property type="entry name" value="ARM-type_fold"/>
</dbReference>
<dbReference type="InterPro" id="IPR000048">
    <property type="entry name" value="IQ_motif_EF-hand-BS"/>
</dbReference>
<dbReference type="InterPro" id="IPR028765">
    <property type="entry name" value="IQCB1"/>
</dbReference>
<dbReference type="InterPro" id="IPR027417">
    <property type="entry name" value="P-loop_NTPase"/>
</dbReference>
<dbReference type="PANTHER" id="PTHR15673">
    <property type="entry name" value="IQ CALMODULIN-BINDING MOTIF CONTAINING PROTEIN 1"/>
    <property type="match status" value="1"/>
</dbReference>
<dbReference type="PANTHER" id="PTHR15673:SF2">
    <property type="entry name" value="IQ CALMODULIN-BINDING MOTIF-CONTAINING PROTEIN 1"/>
    <property type="match status" value="1"/>
</dbReference>
<dbReference type="Pfam" id="PF00612">
    <property type="entry name" value="IQ"/>
    <property type="match status" value="2"/>
</dbReference>
<dbReference type="SMART" id="SM00015">
    <property type="entry name" value="IQ"/>
    <property type="match status" value="2"/>
</dbReference>
<dbReference type="SUPFAM" id="SSF48371">
    <property type="entry name" value="ARM repeat"/>
    <property type="match status" value="1"/>
</dbReference>
<dbReference type="SUPFAM" id="SSF52540">
    <property type="entry name" value="P-loop containing nucleoside triphosphate hydrolases"/>
    <property type="match status" value="1"/>
</dbReference>
<dbReference type="PROSITE" id="PS50096">
    <property type="entry name" value="IQ"/>
    <property type="match status" value="2"/>
</dbReference>
<keyword id="KW-0025">Alternative splicing</keyword>
<keyword id="KW-0112">Calmodulin-binding</keyword>
<keyword id="KW-1186">Ciliopathy</keyword>
<keyword id="KW-0970">Cilium biogenesis/degradation</keyword>
<keyword id="KW-0175">Coiled coil</keyword>
<keyword id="KW-0963">Cytoplasm</keyword>
<keyword id="KW-0206">Cytoskeleton</keyword>
<keyword id="KW-0901">Leber congenital amaurosis</keyword>
<keyword id="KW-0983">Nephronophthisis</keyword>
<keyword id="KW-0597">Phosphoprotein</keyword>
<keyword id="KW-1267">Proteomics identification</keyword>
<keyword id="KW-1185">Reference proteome</keyword>
<keyword id="KW-0677">Repeat</keyword>
<keyword id="KW-0980">Senior-Loken syndrome</keyword>
<accession>Q15051</accession>
<accession>Q3KS08</accession>
<accession>Q3KS09</accession>
<accession>Q5DKQ7</accession>
<accession>Q8NI79</accession>
<accession>Q9BS08</accession>
<reference key="1">
    <citation type="journal article" date="2005" name="Cancer Res.">
        <title>Cloning and characterization of a p53 and DNA damage down-regulated gene PIQ that codes for a novel calmodulin-binding IQ motif protein and is up-regulated in gastrointestinal cancers.</title>
        <authorList>
            <person name="Luo X."/>
            <person name="He Q."/>
            <person name="Huang Y."/>
            <person name="Sheikh M.S."/>
        </authorList>
    </citation>
    <scope>NUCLEOTIDE SEQUENCE [MRNA] (ISOFORMS 1 AND 2)</scope>
    <scope>CALMODULIN BINDING</scope>
    <scope>INDUCTION</scope>
    <scope>TISSUE SPECIFICITY</scope>
</reference>
<reference key="2">
    <citation type="journal article" date="2005" name="Nat. Genet.">
        <title>Nephrocystin-5, a ciliary IQ domain protein, is mutated in Senior-Loken syndrome and interacts with RPGR and calmodulin.</title>
        <authorList>
            <person name="Otto E.A."/>
            <person name="Loeys B."/>
            <person name="Khanna H."/>
            <person name="Hellemans J."/>
            <person name="Sudbrak R."/>
            <person name="Fan S."/>
            <person name="Muerb U."/>
            <person name="O'Toole J.F."/>
            <person name="Helou J."/>
            <person name="Attanasio M."/>
            <person name="Utsch B."/>
            <person name="Sayer J.A."/>
            <person name="Lillo C."/>
            <person name="Jimeno D."/>
            <person name="Coucke P."/>
            <person name="De Paepe A."/>
            <person name="Reinhardt R."/>
            <person name="Klages S."/>
            <person name="Tsuda M."/>
            <person name="Kawakami I."/>
            <person name="Kusakabe T."/>
            <person name="Omran H."/>
            <person name="Imm A."/>
            <person name="Tippens M."/>
            <person name="Raymond P.A."/>
            <person name="Hill J."/>
            <person name="Beales P."/>
            <person name="He S."/>
            <person name="Kispert A."/>
            <person name="Margolis B."/>
            <person name="Williams D.S."/>
            <person name="Swaroop A."/>
            <person name="Hildebrandt F."/>
        </authorList>
    </citation>
    <scope>NUCLEOTIDE SEQUENCE [MRNA] (ISOFORM 1)</scope>
    <scope>TISSUE SPECIFICITY</scope>
    <scope>INTERACTION WITH CALMODULIN</scope>
    <scope>INVOLVEMENT IN SLSN5</scope>
    <scope>VARIANT ASN-393</scope>
</reference>
<reference key="3">
    <citation type="journal article" date="1994" name="DNA Res.">
        <title>Prediction of the coding sequences of unidentified human genes. I. The coding sequences of 40 new genes (KIAA0001-KIAA0040) deduced by analysis of randomly sampled cDNA clones from human immature myeloid cell line KG-1.</title>
        <authorList>
            <person name="Nomura N."/>
            <person name="Miyajima N."/>
            <person name="Sazuka T."/>
            <person name="Tanaka A."/>
            <person name="Kawarabayasi Y."/>
            <person name="Sato S."/>
            <person name="Nagase T."/>
            <person name="Seki N."/>
            <person name="Ishikawa K."/>
            <person name="Tabata S."/>
        </authorList>
    </citation>
    <scope>NUCLEOTIDE SEQUENCE [LARGE SCALE MRNA] (ISOFORM 1)</scope>
    <source>
        <tissue>Bone marrow</tissue>
    </source>
</reference>
<reference key="4">
    <citation type="submission" date="2001-05" db="EMBL/GenBank/DDBJ databases">
        <title>Identification of immuno-peptidmics that are recognized by tumor-reactive CTL generated from TIL of colon cancer patients.</title>
        <authorList>
            <person name="Shichijo S."/>
            <person name="Itoh K."/>
        </authorList>
    </citation>
    <scope>NUCLEOTIDE SEQUENCE [LARGE SCALE MRNA] (ISOFORM 3)</scope>
    <source>
        <tissue>Colon adenocarcinoma</tissue>
    </source>
</reference>
<reference key="5">
    <citation type="submission" date="2005-09" db="EMBL/GenBank/DDBJ databases">
        <authorList>
            <person name="Mural R.J."/>
            <person name="Istrail S."/>
            <person name="Sutton G."/>
            <person name="Florea L."/>
            <person name="Halpern A.L."/>
            <person name="Mobarry C.M."/>
            <person name="Lippert R."/>
            <person name="Walenz B."/>
            <person name="Shatkay H."/>
            <person name="Dew I."/>
            <person name="Miller J.R."/>
            <person name="Flanigan M.J."/>
            <person name="Edwards N.J."/>
            <person name="Bolanos R."/>
            <person name="Fasulo D."/>
            <person name="Halldorsson B.V."/>
            <person name="Hannenhalli S."/>
            <person name="Turner R."/>
            <person name="Yooseph S."/>
            <person name="Lu F."/>
            <person name="Nusskern D.R."/>
            <person name="Shue B.C."/>
            <person name="Zheng X.H."/>
            <person name="Zhong F."/>
            <person name="Delcher A.L."/>
            <person name="Huson D.H."/>
            <person name="Kravitz S.A."/>
            <person name="Mouchard L."/>
            <person name="Reinert K."/>
            <person name="Remington K.A."/>
            <person name="Clark A.G."/>
            <person name="Waterman M.S."/>
            <person name="Eichler E.E."/>
            <person name="Adams M.D."/>
            <person name="Hunkapiller M.W."/>
            <person name="Myers E.W."/>
            <person name="Venter J.C."/>
        </authorList>
    </citation>
    <scope>NUCLEOTIDE SEQUENCE [LARGE SCALE GENOMIC DNA]</scope>
</reference>
<reference key="6">
    <citation type="journal article" date="2004" name="Genome Res.">
        <title>The status, quality, and expansion of the NIH full-length cDNA project: the Mammalian Gene Collection (MGC).</title>
        <authorList>
            <consortium name="The MGC Project Team"/>
        </authorList>
    </citation>
    <scope>NUCLEOTIDE SEQUENCE [LARGE SCALE MRNA] (ISOFORM 2)</scope>
    <scope>VARIANT TYR-434</scope>
    <source>
        <tissue>Ovary</tissue>
    </source>
</reference>
<reference key="7">
    <citation type="journal article" date="2008" name="Hum. Mol. Genet.">
        <title>Genetic and physical interaction between the NPHP5 and NPHP6 gene products.</title>
        <authorList>
            <person name="Schaefer T."/>
            <person name="Puetz M."/>
            <person name="Lienkamp S."/>
            <person name="Ganner A."/>
            <person name="Bergbreiter A."/>
            <person name="Ramachandran H."/>
            <person name="Gieloff V."/>
            <person name="Gerner M."/>
            <person name="Mattonet C."/>
            <person name="Czarnecki P.G."/>
            <person name="Sayer J.A."/>
            <person name="Otto E.A."/>
            <person name="Hildebrandt F."/>
            <person name="Kramer-Zucker A."/>
            <person name="Walz G."/>
        </authorList>
    </citation>
    <scope>INTERACTION WITH CEP290</scope>
</reference>
<reference key="8">
    <citation type="journal article" date="2008" name="Proc. Natl. Acad. Sci. U.S.A.">
        <title>A quantitative atlas of mitotic phosphorylation.</title>
        <authorList>
            <person name="Dephoure N."/>
            <person name="Zhou C."/>
            <person name="Villen J."/>
            <person name="Beausoleil S.A."/>
            <person name="Bakalarski C.E."/>
            <person name="Elledge S.J."/>
            <person name="Gygi S.P."/>
        </authorList>
    </citation>
    <scope>PHOSPHORYLATION [LARGE SCALE ANALYSIS] AT SER-572</scope>
    <scope>IDENTIFICATION BY MASS SPECTROMETRY [LARGE SCALE ANALYSIS]</scope>
    <source>
        <tissue>Cervix carcinoma</tissue>
    </source>
</reference>
<reference key="9">
    <citation type="journal article" date="2011" name="BMC Syst. Biol.">
        <title>Initial characterization of the human central proteome.</title>
        <authorList>
            <person name="Burkard T.R."/>
            <person name="Planyavsky M."/>
            <person name="Kaupe I."/>
            <person name="Breitwieser F.P."/>
            <person name="Buerckstuemmer T."/>
            <person name="Bennett K.L."/>
            <person name="Superti-Furga G."/>
            <person name="Colinge J."/>
        </authorList>
    </citation>
    <scope>IDENTIFICATION BY MASS SPECTROMETRY [LARGE SCALE ANALYSIS]</scope>
</reference>
<reference key="10">
    <citation type="journal article" date="2011" name="Cell">
        <title>Mapping the NPHP-JBTS-MKS protein network reveals ciliopathy disease genes and pathways.</title>
        <authorList>
            <person name="Sang L."/>
            <person name="Miller J.J."/>
            <person name="Corbit K.C."/>
            <person name="Giles R.H."/>
            <person name="Brauer M.J."/>
            <person name="Otto E.A."/>
            <person name="Baye L.M."/>
            <person name="Wen X."/>
            <person name="Scales S.J."/>
            <person name="Kwong M."/>
            <person name="Huntzicker E.G."/>
            <person name="Sfakianos M.K."/>
            <person name="Sandoval W."/>
            <person name="Bazan J.F."/>
            <person name="Kulkarni P."/>
            <person name="Garcia-Gonzalo F.R."/>
            <person name="Seol A.D."/>
            <person name="O'Toole J.F."/>
            <person name="Held S."/>
            <person name="Reutter H.M."/>
            <person name="Lane W.S."/>
            <person name="Rafiq M.A."/>
            <person name="Noor A."/>
            <person name="Ansar M."/>
            <person name="Devi A.R."/>
            <person name="Sheffield V.C."/>
            <person name="Slusarski D.C."/>
            <person name="Vincent J.B."/>
            <person name="Doherty D.A."/>
            <person name="Hildebrandt F."/>
            <person name="Reiter J.F."/>
            <person name="Jackson P.K."/>
        </authorList>
    </citation>
    <scope>FUNCTION</scope>
</reference>
<reference key="11">
    <citation type="journal article" date="2013" name="Hum. Mol. Genet.">
        <title>Pathogenic NPHP5 mutations impair protein interaction with Cep290, a prerequisite for ciliogenesis.</title>
        <authorList>
            <person name="Barbelanne M."/>
            <person name="Song J."/>
            <person name="Ahmadzai M."/>
            <person name="Tsang W.Y."/>
        </authorList>
    </citation>
    <scope>FUNCTION</scope>
    <scope>SUBCELLULAR LOCATION</scope>
    <scope>INTERACTION WITH CEP290 AND CALMODULIN</scope>
    <scope>MUTAGENESIS OF ALA-549</scope>
    <scope>CHARACTERIZATION OF VARIANT ASN-393</scope>
    <scope>POSSIBLE INVOLVEMENT IN LCA10</scope>
</reference>
<reference key="12">
    <citation type="journal article" date="2015" name="Hum. Mol. Genet.">
        <title>Nephrocystin proteins NPHP5 and Cep290 regulate BBSome integrity, ciliary trafficking and cargo delivery.</title>
        <authorList>
            <person name="Barbelanne M."/>
            <person name="Hossain D."/>
            <person name="Chan D.P."/>
            <person name="Peraenen J."/>
            <person name="Tsang W.Y."/>
        </authorList>
    </citation>
    <scope>FUNCTION</scope>
    <scope>INTERACTION WITH THE BBSOME COMPLEX</scope>
    <scope>INTERACTION WITH CEP290</scope>
    <scope>MUTAGENESIS OF ALA-549</scope>
</reference>
<protein>
    <recommendedName>
        <fullName>IQ calmodulin-binding motif-containing protein 1</fullName>
    </recommendedName>
    <alternativeName>
        <fullName>Nephrocystin-5</fullName>
    </alternativeName>
    <alternativeName>
        <fullName>p53 and DNA damage-regulated IQ motif protein</fullName>
        <shortName>PIQ</shortName>
    </alternativeName>
</protein>